<keyword id="KW-0131">Cell cycle</keyword>
<keyword id="KW-0132">Cell division</keyword>
<keyword id="KW-0342">GTP-binding</keyword>
<keyword id="KW-0460">Magnesium</keyword>
<keyword id="KW-0479">Metal-binding</keyword>
<keyword id="KW-0547">Nucleotide-binding</keyword>
<keyword id="KW-1185">Reference proteome</keyword>
<keyword id="KW-0717">Septation</keyword>
<organism>
    <name type="scientific">Citrifermentans bemidjiense (strain ATCC BAA-1014 / DSM 16622 / JCM 12645 / Bem)</name>
    <name type="common">Geobacter bemidjiensis</name>
    <dbReference type="NCBI Taxonomy" id="404380"/>
    <lineage>
        <taxon>Bacteria</taxon>
        <taxon>Pseudomonadati</taxon>
        <taxon>Thermodesulfobacteriota</taxon>
        <taxon>Desulfuromonadia</taxon>
        <taxon>Geobacterales</taxon>
        <taxon>Geobacteraceae</taxon>
        <taxon>Citrifermentans</taxon>
    </lineage>
</organism>
<accession>B5EEM1</accession>
<sequence length="214" mass="23963">MIVKQTEFIKSATKPAHYPEGNLPEIAFAGRSNVGKSSLVNVLVNRKNLVRTSSTPGRTQLINFFQVNDDFMLVDLPGYGYAKVPLAVKKEWRPMMETYLSKRRNLRGVVLILDIRRTPTEEDLQMLAWLRAFSVPPIVVITKCDKVSKNERARQSAVIMEKMQLKKEELNYFSALSKEGKDAVWARIDALLSPAAAETTEISGDPAPSAPVND</sequence>
<reference key="1">
    <citation type="submission" date="2008-07" db="EMBL/GenBank/DDBJ databases">
        <title>Complete sequence of Geobacter bemidjiensis BEM.</title>
        <authorList>
            <consortium name="US DOE Joint Genome Institute"/>
            <person name="Lucas S."/>
            <person name="Copeland A."/>
            <person name="Lapidus A."/>
            <person name="Glavina del Rio T."/>
            <person name="Dalin E."/>
            <person name="Tice H."/>
            <person name="Bruce D."/>
            <person name="Goodwin L."/>
            <person name="Pitluck S."/>
            <person name="Kiss H."/>
            <person name="Brettin T."/>
            <person name="Detter J.C."/>
            <person name="Han C."/>
            <person name="Kuske C.R."/>
            <person name="Schmutz J."/>
            <person name="Larimer F."/>
            <person name="Land M."/>
            <person name="Hauser L."/>
            <person name="Kyrpides N."/>
            <person name="Lykidis A."/>
            <person name="Lovley D."/>
            <person name="Richardson P."/>
        </authorList>
    </citation>
    <scope>NUCLEOTIDE SEQUENCE [LARGE SCALE GENOMIC DNA]</scope>
    <source>
        <strain>ATCC BAA-1014 / DSM 16622 / JCM 12645 / Bem</strain>
    </source>
</reference>
<feature type="chain" id="PRO_1000115974" description="Probable GTP-binding protein EngB">
    <location>
        <begin position="1"/>
        <end position="214"/>
    </location>
</feature>
<feature type="domain" description="EngB-type G" evidence="1">
    <location>
        <begin position="22"/>
        <end position="194"/>
    </location>
</feature>
<feature type="binding site" evidence="1">
    <location>
        <begin position="30"/>
        <end position="37"/>
    </location>
    <ligand>
        <name>GTP</name>
        <dbReference type="ChEBI" id="CHEBI:37565"/>
    </ligand>
</feature>
<feature type="binding site" evidence="1">
    <location>
        <position position="37"/>
    </location>
    <ligand>
        <name>Mg(2+)</name>
        <dbReference type="ChEBI" id="CHEBI:18420"/>
    </ligand>
</feature>
<feature type="binding site" evidence="1">
    <location>
        <begin position="57"/>
        <end position="61"/>
    </location>
    <ligand>
        <name>GTP</name>
        <dbReference type="ChEBI" id="CHEBI:37565"/>
    </ligand>
</feature>
<feature type="binding site" evidence="1">
    <location>
        <position position="59"/>
    </location>
    <ligand>
        <name>Mg(2+)</name>
        <dbReference type="ChEBI" id="CHEBI:18420"/>
    </ligand>
</feature>
<feature type="binding site" evidence="1">
    <location>
        <begin position="75"/>
        <end position="78"/>
    </location>
    <ligand>
        <name>GTP</name>
        <dbReference type="ChEBI" id="CHEBI:37565"/>
    </ligand>
</feature>
<feature type="binding site" evidence="1">
    <location>
        <begin position="142"/>
        <end position="145"/>
    </location>
    <ligand>
        <name>GTP</name>
        <dbReference type="ChEBI" id="CHEBI:37565"/>
    </ligand>
</feature>
<feature type="binding site" evidence="1">
    <location>
        <begin position="173"/>
        <end position="175"/>
    </location>
    <ligand>
        <name>GTP</name>
        <dbReference type="ChEBI" id="CHEBI:37565"/>
    </ligand>
</feature>
<gene>
    <name evidence="1" type="primary">engB</name>
    <name type="ordered locus">Gbem_3815</name>
</gene>
<dbReference type="EMBL" id="CP001124">
    <property type="protein sequence ID" value="ACH40807.1"/>
    <property type="molecule type" value="Genomic_DNA"/>
</dbReference>
<dbReference type="SMR" id="B5EEM1"/>
<dbReference type="STRING" id="404380.Gbem_3815"/>
<dbReference type="KEGG" id="gbm:Gbem_3815"/>
<dbReference type="eggNOG" id="COG0218">
    <property type="taxonomic scope" value="Bacteria"/>
</dbReference>
<dbReference type="HOGENOM" id="CLU_033732_3_0_7"/>
<dbReference type="OrthoDB" id="9804921at2"/>
<dbReference type="Proteomes" id="UP000008825">
    <property type="component" value="Chromosome"/>
</dbReference>
<dbReference type="GO" id="GO:0005829">
    <property type="term" value="C:cytosol"/>
    <property type="evidence" value="ECO:0007669"/>
    <property type="project" value="TreeGrafter"/>
</dbReference>
<dbReference type="GO" id="GO:0005525">
    <property type="term" value="F:GTP binding"/>
    <property type="evidence" value="ECO:0007669"/>
    <property type="project" value="UniProtKB-UniRule"/>
</dbReference>
<dbReference type="GO" id="GO:0046872">
    <property type="term" value="F:metal ion binding"/>
    <property type="evidence" value="ECO:0007669"/>
    <property type="project" value="UniProtKB-KW"/>
</dbReference>
<dbReference type="GO" id="GO:0000917">
    <property type="term" value="P:division septum assembly"/>
    <property type="evidence" value="ECO:0007669"/>
    <property type="project" value="UniProtKB-KW"/>
</dbReference>
<dbReference type="CDD" id="cd01876">
    <property type="entry name" value="YihA_EngB"/>
    <property type="match status" value="1"/>
</dbReference>
<dbReference type="FunFam" id="3.40.50.300:FF:000098">
    <property type="entry name" value="Probable GTP-binding protein EngB"/>
    <property type="match status" value="1"/>
</dbReference>
<dbReference type="Gene3D" id="3.40.50.300">
    <property type="entry name" value="P-loop containing nucleotide triphosphate hydrolases"/>
    <property type="match status" value="1"/>
</dbReference>
<dbReference type="HAMAP" id="MF_00321">
    <property type="entry name" value="GTPase_EngB"/>
    <property type="match status" value="1"/>
</dbReference>
<dbReference type="InterPro" id="IPR030393">
    <property type="entry name" value="G_ENGB_dom"/>
</dbReference>
<dbReference type="InterPro" id="IPR006073">
    <property type="entry name" value="GTP-bd"/>
</dbReference>
<dbReference type="InterPro" id="IPR019987">
    <property type="entry name" value="GTP-bd_ribosome_bio_YsxC"/>
</dbReference>
<dbReference type="InterPro" id="IPR027417">
    <property type="entry name" value="P-loop_NTPase"/>
</dbReference>
<dbReference type="NCBIfam" id="TIGR03598">
    <property type="entry name" value="GTPase_YsxC"/>
    <property type="match status" value="1"/>
</dbReference>
<dbReference type="PANTHER" id="PTHR11649:SF13">
    <property type="entry name" value="ENGB-TYPE G DOMAIN-CONTAINING PROTEIN"/>
    <property type="match status" value="1"/>
</dbReference>
<dbReference type="PANTHER" id="PTHR11649">
    <property type="entry name" value="MSS1/TRME-RELATED GTP-BINDING PROTEIN"/>
    <property type="match status" value="1"/>
</dbReference>
<dbReference type="Pfam" id="PF01926">
    <property type="entry name" value="MMR_HSR1"/>
    <property type="match status" value="1"/>
</dbReference>
<dbReference type="SUPFAM" id="SSF52540">
    <property type="entry name" value="P-loop containing nucleoside triphosphate hydrolases"/>
    <property type="match status" value="1"/>
</dbReference>
<dbReference type="PROSITE" id="PS51706">
    <property type="entry name" value="G_ENGB"/>
    <property type="match status" value="1"/>
</dbReference>
<evidence type="ECO:0000255" key="1">
    <source>
        <dbReference type="HAMAP-Rule" id="MF_00321"/>
    </source>
</evidence>
<proteinExistence type="inferred from homology"/>
<comment type="function">
    <text evidence="1">Necessary for normal cell division and for the maintenance of normal septation.</text>
</comment>
<comment type="cofactor">
    <cofactor evidence="1">
        <name>Mg(2+)</name>
        <dbReference type="ChEBI" id="CHEBI:18420"/>
    </cofactor>
</comment>
<comment type="similarity">
    <text evidence="1">Belongs to the TRAFAC class TrmE-Era-EngA-EngB-Septin-like GTPase superfamily. EngB GTPase family.</text>
</comment>
<protein>
    <recommendedName>
        <fullName evidence="1">Probable GTP-binding protein EngB</fullName>
    </recommendedName>
</protein>
<name>ENGB_CITBB</name>